<feature type="chain" id="PRO_1000215295" description="tRNA N6-adenosine threonylcarbamoyltransferase">
    <location>
        <begin position="1"/>
        <end position="356"/>
    </location>
</feature>
<feature type="binding site" evidence="1">
    <location>
        <position position="110"/>
    </location>
    <ligand>
        <name>Fe cation</name>
        <dbReference type="ChEBI" id="CHEBI:24875"/>
    </ligand>
</feature>
<feature type="binding site" evidence="1">
    <location>
        <position position="114"/>
    </location>
    <ligand>
        <name>Fe cation</name>
        <dbReference type="ChEBI" id="CHEBI:24875"/>
    </ligand>
</feature>
<feature type="binding site" evidence="1">
    <location>
        <begin position="132"/>
        <end position="136"/>
    </location>
    <ligand>
        <name>substrate</name>
    </ligand>
</feature>
<feature type="binding site" evidence="1">
    <location>
        <position position="165"/>
    </location>
    <ligand>
        <name>substrate</name>
    </ligand>
</feature>
<feature type="binding site" evidence="1">
    <location>
        <position position="178"/>
    </location>
    <ligand>
        <name>substrate</name>
    </ligand>
</feature>
<feature type="binding site" evidence="1">
    <location>
        <position position="182"/>
    </location>
    <ligand>
        <name>substrate</name>
    </ligand>
</feature>
<feature type="binding site" evidence="1">
    <location>
        <position position="288"/>
    </location>
    <ligand>
        <name>substrate</name>
    </ligand>
</feature>
<feature type="binding site" evidence="1">
    <location>
        <position position="316"/>
    </location>
    <ligand>
        <name>Fe cation</name>
        <dbReference type="ChEBI" id="CHEBI:24875"/>
    </ligand>
</feature>
<gene>
    <name evidence="1" type="primary">tsaD</name>
    <name type="synonym">gcp</name>
    <name type="ordered locus">Desal_1816</name>
</gene>
<comment type="function">
    <text evidence="1">Required for the formation of a threonylcarbamoyl group on adenosine at position 37 (t(6)A37) in tRNAs that read codons beginning with adenine. Is involved in the transfer of the threonylcarbamoyl moiety of threonylcarbamoyl-AMP (TC-AMP) to the N6 group of A37, together with TsaE and TsaB. TsaD likely plays a direct catalytic role in this reaction.</text>
</comment>
<comment type="catalytic activity">
    <reaction evidence="1">
        <text>L-threonylcarbamoyladenylate + adenosine(37) in tRNA = N(6)-L-threonylcarbamoyladenosine(37) in tRNA + AMP + H(+)</text>
        <dbReference type="Rhea" id="RHEA:37059"/>
        <dbReference type="Rhea" id="RHEA-COMP:10162"/>
        <dbReference type="Rhea" id="RHEA-COMP:10163"/>
        <dbReference type="ChEBI" id="CHEBI:15378"/>
        <dbReference type="ChEBI" id="CHEBI:73682"/>
        <dbReference type="ChEBI" id="CHEBI:74411"/>
        <dbReference type="ChEBI" id="CHEBI:74418"/>
        <dbReference type="ChEBI" id="CHEBI:456215"/>
        <dbReference type="EC" id="2.3.1.234"/>
    </reaction>
</comment>
<comment type="cofactor">
    <cofactor evidence="1">
        <name>Fe(2+)</name>
        <dbReference type="ChEBI" id="CHEBI:29033"/>
    </cofactor>
    <text evidence="1">Binds 1 Fe(2+) ion per subunit.</text>
</comment>
<comment type="subcellular location">
    <subcellularLocation>
        <location evidence="1">Cytoplasm</location>
    </subcellularLocation>
</comment>
<comment type="similarity">
    <text evidence="1">Belongs to the KAE1 / TsaD family.</text>
</comment>
<sequence length="356" mass="38197">MLCLGIESSCDETGLALVRDGKLVAEKLASQVDVHAVFGGVVPEIASREHLRVLPVLLRELLKEQRLTIDDIDVVSVARGPGLQGCLLMGLSFAKGLVLSCGAKLVGVNHLWAHLTAAGLEQDLQFPSLGLLVSGGHTHIYLIESPLQFTLLGRTLDDAAGEAFDKTAKSLNLPYPGGKLVDDLGRQGVVNKKLFPVPYINNDNLDFSFSGLKTAVANYVNQNSNLRLDTMGIPEEGVEEPAISEERKNMLASFNYTVGRTLEVKVERALKRNRGVKSLIVAGGVAANSVVRSVMTDVAAKFSIPLVLPSMHLCTDNGAMIAYAGYLMASAGCRHDLDLDAIPRGRVIPSDWICEG</sequence>
<protein>
    <recommendedName>
        <fullName evidence="1">tRNA N6-adenosine threonylcarbamoyltransferase</fullName>
        <ecNumber evidence="1">2.3.1.234</ecNumber>
    </recommendedName>
    <alternativeName>
        <fullName evidence="1">N6-L-threonylcarbamoyladenine synthase</fullName>
        <shortName evidence="1">t(6)A synthase</shortName>
    </alternativeName>
    <alternativeName>
        <fullName evidence="1">t(6)A37 threonylcarbamoyladenosine biosynthesis protein TsaD</fullName>
    </alternativeName>
    <alternativeName>
        <fullName evidence="1">tRNA threonylcarbamoyladenosine biosynthesis protein TsaD</fullName>
    </alternativeName>
</protein>
<reference key="1">
    <citation type="submission" date="2009-06" db="EMBL/GenBank/DDBJ databases">
        <title>Complete sequence of Desulfovibrio salexigens DSM 2638.</title>
        <authorList>
            <consortium name="US DOE Joint Genome Institute"/>
            <person name="Lucas S."/>
            <person name="Copeland A."/>
            <person name="Lapidus A."/>
            <person name="Glavina del Rio T."/>
            <person name="Tice H."/>
            <person name="Bruce D."/>
            <person name="Goodwin L."/>
            <person name="Pitluck S."/>
            <person name="Munk A.C."/>
            <person name="Brettin T."/>
            <person name="Detter J.C."/>
            <person name="Han C."/>
            <person name="Tapia R."/>
            <person name="Larimer F."/>
            <person name="Land M."/>
            <person name="Hauser L."/>
            <person name="Kyrpides N."/>
            <person name="Anderson I."/>
            <person name="Wall J.D."/>
            <person name="Arkin A.P."/>
            <person name="Dehal P."/>
            <person name="Chivian D."/>
            <person name="Giles B."/>
            <person name="Hazen T.C."/>
        </authorList>
    </citation>
    <scope>NUCLEOTIDE SEQUENCE [LARGE SCALE GENOMIC DNA]</scope>
    <source>
        <strain>ATCC 14822 / DSM 2638 / NCIMB 8403 / VKM B-1763</strain>
    </source>
</reference>
<dbReference type="EC" id="2.3.1.234" evidence="1"/>
<dbReference type="EMBL" id="CP001649">
    <property type="protein sequence ID" value="ACS79878.1"/>
    <property type="molecule type" value="Genomic_DNA"/>
</dbReference>
<dbReference type="RefSeq" id="WP_015851694.1">
    <property type="nucleotide sequence ID" value="NC_012881.1"/>
</dbReference>
<dbReference type="SMR" id="C6BTU8"/>
<dbReference type="STRING" id="526222.Desal_1816"/>
<dbReference type="KEGG" id="dsa:Desal_1816"/>
<dbReference type="eggNOG" id="COG0533">
    <property type="taxonomic scope" value="Bacteria"/>
</dbReference>
<dbReference type="HOGENOM" id="CLU_023208_0_2_7"/>
<dbReference type="OrthoDB" id="9806197at2"/>
<dbReference type="Proteomes" id="UP000002601">
    <property type="component" value="Chromosome"/>
</dbReference>
<dbReference type="GO" id="GO:0005737">
    <property type="term" value="C:cytoplasm"/>
    <property type="evidence" value="ECO:0007669"/>
    <property type="project" value="UniProtKB-SubCell"/>
</dbReference>
<dbReference type="GO" id="GO:0005506">
    <property type="term" value="F:iron ion binding"/>
    <property type="evidence" value="ECO:0007669"/>
    <property type="project" value="UniProtKB-UniRule"/>
</dbReference>
<dbReference type="GO" id="GO:0061711">
    <property type="term" value="F:N(6)-L-threonylcarbamoyladenine synthase activity"/>
    <property type="evidence" value="ECO:0007669"/>
    <property type="project" value="UniProtKB-EC"/>
</dbReference>
<dbReference type="GO" id="GO:0002949">
    <property type="term" value="P:tRNA threonylcarbamoyladenosine modification"/>
    <property type="evidence" value="ECO:0007669"/>
    <property type="project" value="UniProtKB-UniRule"/>
</dbReference>
<dbReference type="CDD" id="cd24133">
    <property type="entry name" value="ASKHA_NBD_TsaD_bac"/>
    <property type="match status" value="1"/>
</dbReference>
<dbReference type="FunFam" id="3.30.420.40:FF:000012">
    <property type="entry name" value="tRNA N6-adenosine threonylcarbamoyltransferase"/>
    <property type="match status" value="1"/>
</dbReference>
<dbReference type="Gene3D" id="3.30.420.40">
    <property type="match status" value="2"/>
</dbReference>
<dbReference type="HAMAP" id="MF_01445">
    <property type="entry name" value="TsaD"/>
    <property type="match status" value="1"/>
</dbReference>
<dbReference type="InterPro" id="IPR043129">
    <property type="entry name" value="ATPase_NBD"/>
</dbReference>
<dbReference type="InterPro" id="IPR000905">
    <property type="entry name" value="Gcp-like_dom"/>
</dbReference>
<dbReference type="InterPro" id="IPR017861">
    <property type="entry name" value="KAE1/TsaD"/>
</dbReference>
<dbReference type="InterPro" id="IPR022450">
    <property type="entry name" value="TsaD"/>
</dbReference>
<dbReference type="NCBIfam" id="TIGR00329">
    <property type="entry name" value="gcp_kae1"/>
    <property type="match status" value="1"/>
</dbReference>
<dbReference type="NCBIfam" id="TIGR03723">
    <property type="entry name" value="T6A_TsaD_YgjD"/>
    <property type="match status" value="1"/>
</dbReference>
<dbReference type="PANTHER" id="PTHR11735">
    <property type="entry name" value="TRNA N6-ADENOSINE THREONYLCARBAMOYLTRANSFERASE"/>
    <property type="match status" value="1"/>
</dbReference>
<dbReference type="PANTHER" id="PTHR11735:SF6">
    <property type="entry name" value="TRNA N6-ADENOSINE THREONYLCARBAMOYLTRANSFERASE, MITOCHONDRIAL"/>
    <property type="match status" value="1"/>
</dbReference>
<dbReference type="Pfam" id="PF00814">
    <property type="entry name" value="TsaD"/>
    <property type="match status" value="1"/>
</dbReference>
<dbReference type="PRINTS" id="PR00789">
    <property type="entry name" value="OSIALOPTASE"/>
</dbReference>
<dbReference type="SUPFAM" id="SSF53067">
    <property type="entry name" value="Actin-like ATPase domain"/>
    <property type="match status" value="1"/>
</dbReference>
<evidence type="ECO:0000255" key="1">
    <source>
        <dbReference type="HAMAP-Rule" id="MF_01445"/>
    </source>
</evidence>
<organism>
    <name type="scientific">Maridesulfovibrio salexigens (strain ATCC 14822 / DSM 2638 / NCIMB 8403 / VKM B-1763)</name>
    <name type="common">Desulfovibrio salexigens</name>
    <dbReference type="NCBI Taxonomy" id="526222"/>
    <lineage>
        <taxon>Bacteria</taxon>
        <taxon>Pseudomonadati</taxon>
        <taxon>Thermodesulfobacteriota</taxon>
        <taxon>Desulfovibrionia</taxon>
        <taxon>Desulfovibrionales</taxon>
        <taxon>Desulfovibrionaceae</taxon>
        <taxon>Maridesulfovibrio</taxon>
    </lineage>
</organism>
<name>TSAD_MARSD</name>
<keyword id="KW-0012">Acyltransferase</keyword>
<keyword id="KW-0963">Cytoplasm</keyword>
<keyword id="KW-0408">Iron</keyword>
<keyword id="KW-0479">Metal-binding</keyword>
<keyword id="KW-1185">Reference proteome</keyword>
<keyword id="KW-0808">Transferase</keyword>
<keyword id="KW-0819">tRNA processing</keyword>
<proteinExistence type="inferred from homology"/>
<accession>C6BTU8</accession>